<reference key="1">
    <citation type="journal article" date="2010" name="Genome Biol.">
        <title>Structure and dynamics of the pan-genome of Streptococcus pneumoniae and closely related species.</title>
        <authorList>
            <person name="Donati C."/>
            <person name="Hiller N.L."/>
            <person name="Tettelin H."/>
            <person name="Muzzi A."/>
            <person name="Croucher N.J."/>
            <person name="Angiuoli S.V."/>
            <person name="Oggioni M."/>
            <person name="Dunning Hotopp J.C."/>
            <person name="Hu F.Z."/>
            <person name="Riley D.R."/>
            <person name="Covacci A."/>
            <person name="Mitchell T.J."/>
            <person name="Bentley S.D."/>
            <person name="Kilian M."/>
            <person name="Ehrlich G.D."/>
            <person name="Rappuoli R."/>
            <person name="Moxon E.R."/>
            <person name="Masignani V."/>
        </authorList>
    </citation>
    <scope>NUCLEOTIDE SEQUENCE [LARGE SCALE GENOMIC DNA]</scope>
    <source>
        <strain>70585</strain>
    </source>
</reference>
<name>DEF_STRP7</name>
<proteinExistence type="inferred from homology"/>
<organism>
    <name type="scientific">Streptococcus pneumoniae (strain 70585)</name>
    <dbReference type="NCBI Taxonomy" id="488221"/>
    <lineage>
        <taxon>Bacteria</taxon>
        <taxon>Bacillati</taxon>
        <taxon>Bacillota</taxon>
        <taxon>Bacilli</taxon>
        <taxon>Lactobacillales</taxon>
        <taxon>Streptococcaceae</taxon>
        <taxon>Streptococcus</taxon>
    </lineage>
</organism>
<comment type="function">
    <text evidence="1">Removes the formyl group from the N-terminal Met of newly synthesized proteins. Requires at least a dipeptide for an efficient rate of reaction. N-terminal L-methionine is a prerequisite for activity but the enzyme has broad specificity at other positions.</text>
</comment>
<comment type="catalytic activity">
    <reaction evidence="1">
        <text>N-terminal N-formyl-L-methionyl-[peptide] + H2O = N-terminal L-methionyl-[peptide] + formate</text>
        <dbReference type="Rhea" id="RHEA:24420"/>
        <dbReference type="Rhea" id="RHEA-COMP:10639"/>
        <dbReference type="Rhea" id="RHEA-COMP:10640"/>
        <dbReference type="ChEBI" id="CHEBI:15377"/>
        <dbReference type="ChEBI" id="CHEBI:15740"/>
        <dbReference type="ChEBI" id="CHEBI:49298"/>
        <dbReference type="ChEBI" id="CHEBI:64731"/>
        <dbReference type="EC" id="3.5.1.88"/>
    </reaction>
</comment>
<comment type="cofactor">
    <cofactor evidence="1">
        <name>Fe(2+)</name>
        <dbReference type="ChEBI" id="CHEBI:29033"/>
    </cofactor>
    <text evidence="1">Binds 1 Fe(2+) ion.</text>
</comment>
<comment type="similarity">
    <text evidence="1">Belongs to the polypeptide deformylase family.</text>
</comment>
<gene>
    <name evidence="1" type="primary">def</name>
    <name type="ordered locus">SP70585_1497</name>
</gene>
<accession>C1C851</accession>
<dbReference type="EC" id="3.5.1.88" evidence="1"/>
<dbReference type="EMBL" id="CP000918">
    <property type="protein sequence ID" value="ACO17762.1"/>
    <property type="molecule type" value="Genomic_DNA"/>
</dbReference>
<dbReference type="RefSeq" id="WP_001272961.1">
    <property type="nucleotide sequence ID" value="NC_012468.1"/>
</dbReference>
<dbReference type="SMR" id="C1C851"/>
<dbReference type="GeneID" id="45218269"/>
<dbReference type="KEGG" id="snm:SP70585_1497"/>
<dbReference type="HOGENOM" id="CLU_061901_4_0_9"/>
<dbReference type="Proteomes" id="UP000002211">
    <property type="component" value="Chromosome"/>
</dbReference>
<dbReference type="GO" id="GO:0046872">
    <property type="term" value="F:metal ion binding"/>
    <property type="evidence" value="ECO:0007669"/>
    <property type="project" value="UniProtKB-KW"/>
</dbReference>
<dbReference type="GO" id="GO:0042586">
    <property type="term" value="F:peptide deformylase activity"/>
    <property type="evidence" value="ECO:0007669"/>
    <property type="project" value="UniProtKB-UniRule"/>
</dbReference>
<dbReference type="GO" id="GO:0043686">
    <property type="term" value="P:co-translational protein modification"/>
    <property type="evidence" value="ECO:0007669"/>
    <property type="project" value="TreeGrafter"/>
</dbReference>
<dbReference type="GO" id="GO:0006412">
    <property type="term" value="P:translation"/>
    <property type="evidence" value="ECO:0007669"/>
    <property type="project" value="UniProtKB-UniRule"/>
</dbReference>
<dbReference type="CDD" id="cd00487">
    <property type="entry name" value="Pep_deformylase"/>
    <property type="match status" value="1"/>
</dbReference>
<dbReference type="FunFam" id="3.90.45.10:FF:000002">
    <property type="entry name" value="Peptide deformylase"/>
    <property type="match status" value="1"/>
</dbReference>
<dbReference type="Gene3D" id="3.90.45.10">
    <property type="entry name" value="Peptide deformylase"/>
    <property type="match status" value="1"/>
</dbReference>
<dbReference type="HAMAP" id="MF_00163">
    <property type="entry name" value="Pep_deformylase"/>
    <property type="match status" value="1"/>
</dbReference>
<dbReference type="InterPro" id="IPR023635">
    <property type="entry name" value="Peptide_deformylase"/>
</dbReference>
<dbReference type="InterPro" id="IPR036821">
    <property type="entry name" value="Peptide_deformylase_sf"/>
</dbReference>
<dbReference type="NCBIfam" id="TIGR00079">
    <property type="entry name" value="pept_deformyl"/>
    <property type="match status" value="1"/>
</dbReference>
<dbReference type="PANTHER" id="PTHR10458">
    <property type="entry name" value="PEPTIDE DEFORMYLASE"/>
    <property type="match status" value="1"/>
</dbReference>
<dbReference type="PANTHER" id="PTHR10458:SF8">
    <property type="entry name" value="PEPTIDE DEFORMYLASE 2"/>
    <property type="match status" value="1"/>
</dbReference>
<dbReference type="Pfam" id="PF01327">
    <property type="entry name" value="Pep_deformylase"/>
    <property type="match status" value="1"/>
</dbReference>
<dbReference type="PIRSF" id="PIRSF004749">
    <property type="entry name" value="Pep_def"/>
    <property type="match status" value="1"/>
</dbReference>
<dbReference type="PRINTS" id="PR01576">
    <property type="entry name" value="PDEFORMYLASE"/>
</dbReference>
<dbReference type="SUPFAM" id="SSF56420">
    <property type="entry name" value="Peptide deformylase"/>
    <property type="match status" value="1"/>
</dbReference>
<evidence type="ECO:0000255" key="1">
    <source>
        <dbReference type="HAMAP-Rule" id="MF_00163"/>
    </source>
</evidence>
<protein>
    <recommendedName>
        <fullName evidence="1">Peptide deformylase</fullName>
        <shortName evidence="1">PDF</shortName>
        <ecNumber evidence="1">3.5.1.88</ecNumber>
    </recommendedName>
    <alternativeName>
        <fullName evidence="1">Polypeptide deformylase</fullName>
    </alternativeName>
</protein>
<keyword id="KW-0378">Hydrolase</keyword>
<keyword id="KW-0408">Iron</keyword>
<keyword id="KW-0479">Metal-binding</keyword>
<keyword id="KW-0648">Protein biosynthesis</keyword>
<sequence>MSAIERITKAAHLIDMNDIIREGNPTLRTVAEEVTFPLSDQEIILGEKMMQFLKHSQDPVMAEKMGLRGGVGLAAPQLDISKRIIAVLVPNIVEEGETPQEAYDLEAIMYNPKIVSHSVQDAALGEGEGCLSVDRNVPGYVVRHARVTVDYFDKDGEKHRIKLKGYNSIVVQHEIDHINGIMFYDRINEKDPFAVKDGLLILE</sequence>
<feature type="chain" id="PRO_1000200747" description="Peptide deformylase">
    <location>
        <begin position="1"/>
        <end position="203"/>
    </location>
</feature>
<feature type="active site" evidence="1">
    <location>
        <position position="174"/>
    </location>
</feature>
<feature type="binding site" evidence="1">
    <location>
        <position position="130"/>
    </location>
    <ligand>
        <name>Fe cation</name>
        <dbReference type="ChEBI" id="CHEBI:24875"/>
    </ligand>
</feature>
<feature type="binding site" evidence="1">
    <location>
        <position position="173"/>
    </location>
    <ligand>
        <name>Fe cation</name>
        <dbReference type="ChEBI" id="CHEBI:24875"/>
    </ligand>
</feature>
<feature type="binding site" evidence="1">
    <location>
        <position position="177"/>
    </location>
    <ligand>
        <name>Fe cation</name>
        <dbReference type="ChEBI" id="CHEBI:24875"/>
    </ligand>
</feature>